<accession>Q8R6V0</accession>
<reference key="1">
    <citation type="journal article" date="2002" name="Genome Res.">
        <title>A complete sequence of the T. tengcongensis genome.</title>
        <authorList>
            <person name="Bao Q."/>
            <person name="Tian Y."/>
            <person name="Li W."/>
            <person name="Xu Z."/>
            <person name="Xuan Z."/>
            <person name="Hu S."/>
            <person name="Dong W."/>
            <person name="Yang J."/>
            <person name="Chen Y."/>
            <person name="Xue Y."/>
            <person name="Xu Y."/>
            <person name="Lai X."/>
            <person name="Huang L."/>
            <person name="Dong X."/>
            <person name="Ma Y."/>
            <person name="Ling L."/>
            <person name="Tan H."/>
            <person name="Chen R."/>
            <person name="Wang J."/>
            <person name="Yu J."/>
            <person name="Yang H."/>
        </authorList>
    </citation>
    <scope>NUCLEOTIDE SEQUENCE [LARGE SCALE GENOMIC DNA]</scope>
    <source>
        <strain>DSM 15242 / JCM 11007 / NBRC 100824 / MB4</strain>
    </source>
</reference>
<proteinExistence type="inferred from homology"/>
<comment type="function">
    <text evidence="1">Cell wall formation. Adds enolpyruvyl to UDP-N-acetylglucosamine.</text>
</comment>
<comment type="catalytic activity">
    <reaction evidence="1">
        <text>phosphoenolpyruvate + UDP-N-acetyl-alpha-D-glucosamine = UDP-N-acetyl-3-O-(1-carboxyvinyl)-alpha-D-glucosamine + phosphate</text>
        <dbReference type="Rhea" id="RHEA:18681"/>
        <dbReference type="ChEBI" id="CHEBI:43474"/>
        <dbReference type="ChEBI" id="CHEBI:57705"/>
        <dbReference type="ChEBI" id="CHEBI:58702"/>
        <dbReference type="ChEBI" id="CHEBI:68483"/>
        <dbReference type="EC" id="2.5.1.7"/>
    </reaction>
</comment>
<comment type="pathway">
    <text evidence="1">Cell wall biogenesis; peptidoglycan biosynthesis.</text>
</comment>
<comment type="subcellular location">
    <subcellularLocation>
        <location evidence="1">Cytoplasm</location>
    </subcellularLocation>
</comment>
<comment type="similarity">
    <text evidence="1">Belongs to the EPSP synthase family. MurA subfamily.</text>
</comment>
<feature type="chain" id="PRO_0000178946" description="UDP-N-acetylglucosamine 1-carboxyvinyltransferase 3">
    <location>
        <begin position="1"/>
        <end position="417"/>
    </location>
</feature>
<feature type="active site" description="Proton donor" evidence="1">
    <location>
        <position position="116"/>
    </location>
</feature>
<feature type="binding site" evidence="1">
    <location>
        <begin position="22"/>
        <end position="23"/>
    </location>
    <ligand>
        <name>phosphoenolpyruvate</name>
        <dbReference type="ChEBI" id="CHEBI:58702"/>
    </ligand>
</feature>
<feature type="binding site" evidence="1">
    <location>
        <position position="92"/>
    </location>
    <ligand>
        <name>UDP-N-acetyl-alpha-D-glucosamine</name>
        <dbReference type="ChEBI" id="CHEBI:57705"/>
    </ligand>
</feature>
<feature type="binding site" evidence="1">
    <location>
        <begin position="121"/>
        <end position="125"/>
    </location>
    <ligand>
        <name>UDP-N-acetyl-alpha-D-glucosamine</name>
        <dbReference type="ChEBI" id="CHEBI:57705"/>
    </ligand>
</feature>
<feature type="binding site" evidence="1">
    <location>
        <position position="304"/>
    </location>
    <ligand>
        <name>UDP-N-acetyl-alpha-D-glucosamine</name>
        <dbReference type="ChEBI" id="CHEBI:57705"/>
    </ligand>
</feature>
<feature type="binding site" evidence="1">
    <location>
        <position position="326"/>
    </location>
    <ligand>
        <name>UDP-N-acetyl-alpha-D-glucosamine</name>
        <dbReference type="ChEBI" id="CHEBI:57705"/>
    </ligand>
</feature>
<feature type="modified residue" description="2-(S-cysteinyl)pyruvic acid O-phosphothioketal" evidence="1">
    <location>
        <position position="116"/>
    </location>
</feature>
<name>MURA3_CALS4</name>
<gene>
    <name evidence="1" type="primary">murA3</name>
    <name type="ordered locus">TTE2684</name>
</gene>
<evidence type="ECO:0000255" key="1">
    <source>
        <dbReference type="HAMAP-Rule" id="MF_00111"/>
    </source>
</evidence>
<protein>
    <recommendedName>
        <fullName evidence="1">UDP-N-acetylglucosamine 1-carboxyvinyltransferase 3</fullName>
        <ecNumber evidence="1">2.5.1.7</ecNumber>
    </recommendedName>
    <alternativeName>
        <fullName evidence="1">Enoylpyruvate transferase 3</fullName>
    </alternativeName>
    <alternativeName>
        <fullName evidence="1">UDP-N-acetylglucosamine enolpyruvyl transferase 3</fullName>
        <shortName evidence="1">EPT 3</shortName>
    </alternativeName>
</protein>
<organism>
    <name type="scientific">Caldanaerobacter subterraneus subsp. tengcongensis (strain DSM 15242 / JCM 11007 / NBRC 100824 / MB4)</name>
    <name type="common">Thermoanaerobacter tengcongensis</name>
    <dbReference type="NCBI Taxonomy" id="273068"/>
    <lineage>
        <taxon>Bacteria</taxon>
        <taxon>Bacillati</taxon>
        <taxon>Bacillota</taxon>
        <taxon>Clostridia</taxon>
        <taxon>Thermoanaerobacterales</taxon>
        <taxon>Thermoanaerobacteraceae</taxon>
        <taxon>Caldanaerobacter</taxon>
    </lineage>
</organism>
<sequence>MEKFVIRGGKPLRGTVQISGAKNSAVAVLPAALLADSPSVIDNLPDIKDIETLAEIIKRLGGKVEKGKHEIKIDPTGLNSFHPPRELASRMRASYYLIGALLSKFNEAIIPMPGGCNIGVRPIDQHIKGFEALGAETTIEHGFIRIKAEKLRGAHIYFDVVSVGATINLMLAAVKAEGVTILENCAKEPHVVDVANFLNAMGANIKGAGTDTIKITGVDKLEGCHYTIIPDQIEAGTYMVAAAATGGDVYVKGVIPTHLESIIAKLVEMGVIVEEYDDVIRVRREGPLKRVDIKTLPYPGFPTDMQQPFAVLLALADGISVITENIYENRFRYLEELKKMGMKVRVEGRSAIIEGVGKLTGAPVYATDLRGGAAMVIAGLAAEGITEVLDIYHIDRGYEAMEVKLQALGADIIRIRE</sequence>
<dbReference type="EC" id="2.5.1.7" evidence="1"/>
<dbReference type="EMBL" id="AE008691">
    <property type="protein sequence ID" value="AAM25803.1"/>
    <property type="molecule type" value="Genomic_DNA"/>
</dbReference>
<dbReference type="RefSeq" id="WP_011026676.1">
    <property type="nucleotide sequence ID" value="NZ_JANUCV010000001.1"/>
</dbReference>
<dbReference type="SMR" id="Q8R6V0"/>
<dbReference type="STRING" id="273068.TTE2684"/>
<dbReference type="KEGG" id="tte:TTE2684"/>
<dbReference type="eggNOG" id="COG0766">
    <property type="taxonomic scope" value="Bacteria"/>
</dbReference>
<dbReference type="HOGENOM" id="CLU_027387_0_0_9"/>
<dbReference type="OrthoDB" id="9803760at2"/>
<dbReference type="UniPathway" id="UPA00219"/>
<dbReference type="Proteomes" id="UP000000555">
    <property type="component" value="Chromosome"/>
</dbReference>
<dbReference type="GO" id="GO:0005737">
    <property type="term" value="C:cytoplasm"/>
    <property type="evidence" value="ECO:0007669"/>
    <property type="project" value="UniProtKB-SubCell"/>
</dbReference>
<dbReference type="GO" id="GO:0008760">
    <property type="term" value="F:UDP-N-acetylglucosamine 1-carboxyvinyltransferase activity"/>
    <property type="evidence" value="ECO:0007669"/>
    <property type="project" value="UniProtKB-UniRule"/>
</dbReference>
<dbReference type="GO" id="GO:0051301">
    <property type="term" value="P:cell division"/>
    <property type="evidence" value="ECO:0007669"/>
    <property type="project" value="UniProtKB-KW"/>
</dbReference>
<dbReference type="GO" id="GO:0071555">
    <property type="term" value="P:cell wall organization"/>
    <property type="evidence" value="ECO:0007669"/>
    <property type="project" value="UniProtKB-KW"/>
</dbReference>
<dbReference type="GO" id="GO:0009252">
    <property type="term" value="P:peptidoglycan biosynthetic process"/>
    <property type="evidence" value="ECO:0007669"/>
    <property type="project" value="UniProtKB-UniRule"/>
</dbReference>
<dbReference type="GO" id="GO:0008360">
    <property type="term" value="P:regulation of cell shape"/>
    <property type="evidence" value="ECO:0007669"/>
    <property type="project" value="UniProtKB-KW"/>
</dbReference>
<dbReference type="GO" id="GO:0019277">
    <property type="term" value="P:UDP-N-acetylgalactosamine biosynthetic process"/>
    <property type="evidence" value="ECO:0007669"/>
    <property type="project" value="InterPro"/>
</dbReference>
<dbReference type="CDD" id="cd01555">
    <property type="entry name" value="UdpNAET"/>
    <property type="match status" value="1"/>
</dbReference>
<dbReference type="FunFam" id="3.65.10.10:FF:000001">
    <property type="entry name" value="UDP-N-acetylglucosamine 1-carboxyvinyltransferase"/>
    <property type="match status" value="1"/>
</dbReference>
<dbReference type="Gene3D" id="3.65.10.10">
    <property type="entry name" value="Enolpyruvate transferase domain"/>
    <property type="match status" value="2"/>
</dbReference>
<dbReference type="HAMAP" id="MF_00111">
    <property type="entry name" value="MurA"/>
    <property type="match status" value="1"/>
</dbReference>
<dbReference type="InterPro" id="IPR001986">
    <property type="entry name" value="Enolpyruvate_Tfrase_dom"/>
</dbReference>
<dbReference type="InterPro" id="IPR036968">
    <property type="entry name" value="Enolpyruvate_Tfrase_sf"/>
</dbReference>
<dbReference type="InterPro" id="IPR050068">
    <property type="entry name" value="MurA_subfamily"/>
</dbReference>
<dbReference type="InterPro" id="IPR013792">
    <property type="entry name" value="RNA3'P_cycl/enolpyr_Trfase_a/b"/>
</dbReference>
<dbReference type="InterPro" id="IPR005750">
    <property type="entry name" value="UDP_GlcNAc_COvinyl_MurA"/>
</dbReference>
<dbReference type="NCBIfam" id="TIGR01072">
    <property type="entry name" value="murA"/>
    <property type="match status" value="1"/>
</dbReference>
<dbReference type="NCBIfam" id="NF006873">
    <property type="entry name" value="PRK09369.1"/>
    <property type="match status" value="1"/>
</dbReference>
<dbReference type="NCBIfam" id="NF009470">
    <property type="entry name" value="PRK12830.1"/>
    <property type="match status" value="1"/>
</dbReference>
<dbReference type="PANTHER" id="PTHR43783">
    <property type="entry name" value="UDP-N-ACETYLGLUCOSAMINE 1-CARBOXYVINYLTRANSFERASE"/>
    <property type="match status" value="1"/>
</dbReference>
<dbReference type="PANTHER" id="PTHR43783:SF2">
    <property type="entry name" value="UDP-N-ACETYLGLUCOSAMINE 1-CARBOXYVINYLTRANSFERASE 2"/>
    <property type="match status" value="1"/>
</dbReference>
<dbReference type="Pfam" id="PF00275">
    <property type="entry name" value="EPSP_synthase"/>
    <property type="match status" value="1"/>
</dbReference>
<dbReference type="SUPFAM" id="SSF55205">
    <property type="entry name" value="EPT/RTPC-like"/>
    <property type="match status" value="1"/>
</dbReference>
<keyword id="KW-0131">Cell cycle</keyword>
<keyword id="KW-0132">Cell division</keyword>
<keyword id="KW-0133">Cell shape</keyword>
<keyword id="KW-0961">Cell wall biogenesis/degradation</keyword>
<keyword id="KW-0963">Cytoplasm</keyword>
<keyword id="KW-0573">Peptidoglycan synthesis</keyword>
<keyword id="KW-0670">Pyruvate</keyword>
<keyword id="KW-1185">Reference proteome</keyword>
<keyword id="KW-0808">Transferase</keyword>